<accession>Q1C5G0</accession>
<reference key="1">
    <citation type="journal article" date="2006" name="J. Bacteriol.">
        <title>Complete genome sequence of Yersinia pestis strains Antiqua and Nepal516: evidence of gene reduction in an emerging pathogen.</title>
        <authorList>
            <person name="Chain P.S.G."/>
            <person name="Hu P."/>
            <person name="Malfatti S.A."/>
            <person name="Radnedge L."/>
            <person name="Larimer F."/>
            <person name="Vergez L.M."/>
            <person name="Worsham P."/>
            <person name="Chu M.C."/>
            <person name="Andersen G.L."/>
        </authorList>
    </citation>
    <scope>NUCLEOTIDE SEQUENCE [LARGE SCALE GENOMIC DNA]</scope>
    <source>
        <strain>Antiqua</strain>
    </source>
</reference>
<keyword id="KW-0028">Amino-acid biosynthesis</keyword>
<keyword id="KW-0963">Cytoplasm</keyword>
<keyword id="KW-0554">One-carbon metabolism</keyword>
<keyword id="KW-0663">Pyridoxal phosphate</keyword>
<keyword id="KW-0808">Transferase</keyword>
<name>GLYA_YERPA</name>
<proteinExistence type="inferred from homology"/>
<dbReference type="EC" id="2.1.2.1" evidence="1"/>
<dbReference type="EMBL" id="CP000308">
    <property type="protein sequence ID" value="ABG14312.1"/>
    <property type="molecule type" value="Genomic_DNA"/>
</dbReference>
<dbReference type="RefSeq" id="WP_002211552.1">
    <property type="nucleotide sequence ID" value="NZ_CP009906.1"/>
</dbReference>
<dbReference type="SMR" id="Q1C5G0"/>
<dbReference type="GeneID" id="57975864"/>
<dbReference type="KEGG" id="ypa:YPA_2347"/>
<dbReference type="UniPathway" id="UPA00193"/>
<dbReference type="UniPathway" id="UPA00288">
    <property type="reaction ID" value="UER01023"/>
</dbReference>
<dbReference type="Proteomes" id="UP000001971">
    <property type="component" value="Chromosome"/>
</dbReference>
<dbReference type="GO" id="GO:0005829">
    <property type="term" value="C:cytosol"/>
    <property type="evidence" value="ECO:0007669"/>
    <property type="project" value="TreeGrafter"/>
</dbReference>
<dbReference type="GO" id="GO:0004372">
    <property type="term" value="F:glycine hydroxymethyltransferase activity"/>
    <property type="evidence" value="ECO:0007669"/>
    <property type="project" value="UniProtKB-UniRule"/>
</dbReference>
<dbReference type="GO" id="GO:0030170">
    <property type="term" value="F:pyridoxal phosphate binding"/>
    <property type="evidence" value="ECO:0007669"/>
    <property type="project" value="UniProtKB-UniRule"/>
</dbReference>
<dbReference type="GO" id="GO:0019264">
    <property type="term" value="P:glycine biosynthetic process from serine"/>
    <property type="evidence" value="ECO:0007669"/>
    <property type="project" value="UniProtKB-UniRule"/>
</dbReference>
<dbReference type="GO" id="GO:0035999">
    <property type="term" value="P:tetrahydrofolate interconversion"/>
    <property type="evidence" value="ECO:0007669"/>
    <property type="project" value="UniProtKB-UniRule"/>
</dbReference>
<dbReference type="CDD" id="cd00378">
    <property type="entry name" value="SHMT"/>
    <property type="match status" value="1"/>
</dbReference>
<dbReference type="FunFam" id="3.40.640.10:FF:000001">
    <property type="entry name" value="Serine hydroxymethyltransferase"/>
    <property type="match status" value="1"/>
</dbReference>
<dbReference type="FunFam" id="3.90.1150.10:FF:000003">
    <property type="entry name" value="Serine hydroxymethyltransferase"/>
    <property type="match status" value="1"/>
</dbReference>
<dbReference type="Gene3D" id="3.90.1150.10">
    <property type="entry name" value="Aspartate Aminotransferase, domain 1"/>
    <property type="match status" value="1"/>
</dbReference>
<dbReference type="Gene3D" id="3.40.640.10">
    <property type="entry name" value="Type I PLP-dependent aspartate aminotransferase-like (Major domain)"/>
    <property type="match status" value="1"/>
</dbReference>
<dbReference type="HAMAP" id="MF_00051">
    <property type="entry name" value="SHMT"/>
    <property type="match status" value="1"/>
</dbReference>
<dbReference type="InterPro" id="IPR015424">
    <property type="entry name" value="PyrdxlP-dep_Trfase"/>
</dbReference>
<dbReference type="InterPro" id="IPR015421">
    <property type="entry name" value="PyrdxlP-dep_Trfase_major"/>
</dbReference>
<dbReference type="InterPro" id="IPR015422">
    <property type="entry name" value="PyrdxlP-dep_Trfase_small"/>
</dbReference>
<dbReference type="InterPro" id="IPR001085">
    <property type="entry name" value="Ser_HO-MeTrfase"/>
</dbReference>
<dbReference type="InterPro" id="IPR049943">
    <property type="entry name" value="Ser_HO-MeTrfase-like"/>
</dbReference>
<dbReference type="InterPro" id="IPR019798">
    <property type="entry name" value="Ser_HO-MeTrfase_PLP_BS"/>
</dbReference>
<dbReference type="InterPro" id="IPR039429">
    <property type="entry name" value="SHMT-like_dom"/>
</dbReference>
<dbReference type="NCBIfam" id="NF000586">
    <property type="entry name" value="PRK00011.1"/>
    <property type="match status" value="1"/>
</dbReference>
<dbReference type="PANTHER" id="PTHR11680">
    <property type="entry name" value="SERINE HYDROXYMETHYLTRANSFERASE"/>
    <property type="match status" value="1"/>
</dbReference>
<dbReference type="PANTHER" id="PTHR11680:SF50">
    <property type="entry name" value="SERINE HYDROXYMETHYLTRANSFERASE"/>
    <property type="match status" value="1"/>
</dbReference>
<dbReference type="Pfam" id="PF00464">
    <property type="entry name" value="SHMT"/>
    <property type="match status" value="1"/>
</dbReference>
<dbReference type="PIRSF" id="PIRSF000412">
    <property type="entry name" value="SHMT"/>
    <property type="match status" value="1"/>
</dbReference>
<dbReference type="SUPFAM" id="SSF53383">
    <property type="entry name" value="PLP-dependent transferases"/>
    <property type="match status" value="1"/>
</dbReference>
<dbReference type="PROSITE" id="PS00096">
    <property type="entry name" value="SHMT"/>
    <property type="match status" value="1"/>
</dbReference>
<gene>
    <name evidence="1" type="primary">glyA</name>
    <name type="ordered locus">YPA_2347</name>
</gene>
<feature type="chain" id="PRO_1000006344" description="Serine hydroxymethyltransferase">
    <location>
        <begin position="1"/>
        <end position="417"/>
    </location>
</feature>
<feature type="binding site" evidence="1">
    <location>
        <position position="121"/>
    </location>
    <ligand>
        <name>(6S)-5,6,7,8-tetrahydrofolate</name>
        <dbReference type="ChEBI" id="CHEBI:57453"/>
    </ligand>
</feature>
<feature type="binding site" evidence="1">
    <location>
        <begin position="125"/>
        <end position="127"/>
    </location>
    <ligand>
        <name>(6S)-5,6,7,8-tetrahydrofolate</name>
        <dbReference type="ChEBI" id="CHEBI:57453"/>
    </ligand>
</feature>
<feature type="binding site" evidence="1">
    <location>
        <begin position="355"/>
        <end position="357"/>
    </location>
    <ligand>
        <name>(6S)-5,6,7,8-tetrahydrofolate</name>
        <dbReference type="ChEBI" id="CHEBI:57453"/>
    </ligand>
</feature>
<feature type="site" description="Plays an important role in substrate specificity" evidence="1">
    <location>
        <position position="228"/>
    </location>
</feature>
<feature type="modified residue" description="N6-(pyridoxal phosphate)lysine" evidence="1">
    <location>
        <position position="229"/>
    </location>
</feature>
<sequence>MLKREMNIADYDADLWRAMEQEVVRQEEHIELIASENYTSPRVMQAQGSQLTNKYAEGYPGKRYYGGCEYVDVVEQLAIDRAKALFGADYANVQPHSGSQANVAVYSALLKPGDTVLGMNLAHGGHLTHGSPVNFSGKLYNIVPYGIDESGQIDYEDLARQAEIHKPKMIIGGFSAYSGIVDWAKMREIADSIDAWFFVDMAHVAGLVAAGVYPNPVPHAHIVTTTTHKTLAGPRGGLILAKGGDEDLYKKLNSSVFPGNQGGPLMHVIAGKAVALKEAMEPEFKIYQQQVAKNAKAMVAVFLERGYKVVSGGTDNHLFLLDLVDKDITGKDADAALGRANITVNKNSVPNDPKSPFVTSGVRIGSPAITRRGFKEAESRELAGWMCDVLDNINDEATIERVKQKVLAICARLPVYA</sequence>
<comment type="function">
    <text evidence="1">Catalyzes the reversible interconversion of serine and glycine with tetrahydrofolate (THF) serving as the one-carbon carrier. This reaction serves as the major source of one-carbon groups required for the biosynthesis of purines, thymidylate, methionine, and other important biomolecules. Also exhibits THF-independent aldolase activity toward beta-hydroxyamino acids, producing glycine and aldehydes, via a retro-aldol mechanism.</text>
</comment>
<comment type="catalytic activity">
    <reaction evidence="1">
        <text>(6R)-5,10-methylene-5,6,7,8-tetrahydrofolate + glycine + H2O = (6S)-5,6,7,8-tetrahydrofolate + L-serine</text>
        <dbReference type="Rhea" id="RHEA:15481"/>
        <dbReference type="ChEBI" id="CHEBI:15377"/>
        <dbReference type="ChEBI" id="CHEBI:15636"/>
        <dbReference type="ChEBI" id="CHEBI:33384"/>
        <dbReference type="ChEBI" id="CHEBI:57305"/>
        <dbReference type="ChEBI" id="CHEBI:57453"/>
        <dbReference type="EC" id="2.1.2.1"/>
    </reaction>
</comment>
<comment type="cofactor">
    <cofactor evidence="1">
        <name>pyridoxal 5'-phosphate</name>
        <dbReference type="ChEBI" id="CHEBI:597326"/>
    </cofactor>
</comment>
<comment type="pathway">
    <text evidence="1">One-carbon metabolism; tetrahydrofolate interconversion.</text>
</comment>
<comment type="pathway">
    <text evidence="1">Amino-acid biosynthesis; glycine biosynthesis; glycine from L-serine: step 1/1.</text>
</comment>
<comment type="subunit">
    <text evidence="1">Homodimer.</text>
</comment>
<comment type="subcellular location">
    <subcellularLocation>
        <location evidence="1">Cytoplasm</location>
    </subcellularLocation>
</comment>
<comment type="similarity">
    <text evidence="1">Belongs to the SHMT family.</text>
</comment>
<organism>
    <name type="scientific">Yersinia pestis bv. Antiqua (strain Antiqua)</name>
    <dbReference type="NCBI Taxonomy" id="360102"/>
    <lineage>
        <taxon>Bacteria</taxon>
        <taxon>Pseudomonadati</taxon>
        <taxon>Pseudomonadota</taxon>
        <taxon>Gammaproteobacteria</taxon>
        <taxon>Enterobacterales</taxon>
        <taxon>Yersiniaceae</taxon>
        <taxon>Yersinia</taxon>
    </lineage>
</organism>
<evidence type="ECO:0000255" key="1">
    <source>
        <dbReference type="HAMAP-Rule" id="MF_00051"/>
    </source>
</evidence>
<protein>
    <recommendedName>
        <fullName evidence="1">Serine hydroxymethyltransferase</fullName>
        <shortName evidence="1">SHMT</shortName>
        <shortName evidence="1">Serine methylase</shortName>
        <ecNumber evidence="1">2.1.2.1</ecNumber>
    </recommendedName>
</protein>